<feature type="chain" id="PRO_1000132671" description="Flagellar hook-basal body complex protein FliE">
    <location>
        <begin position="1"/>
        <end position="104"/>
    </location>
</feature>
<gene>
    <name evidence="1" type="primary">fliE</name>
    <name type="ordered locus">SEN1041</name>
</gene>
<organism>
    <name type="scientific">Salmonella enteritidis PT4 (strain P125109)</name>
    <dbReference type="NCBI Taxonomy" id="550537"/>
    <lineage>
        <taxon>Bacteria</taxon>
        <taxon>Pseudomonadati</taxon>
        <taxon>Pseudomonadota</taxon>
        <taxon>Gammaproteobacteria</taxon>
        <taxon>Enterobacterales</taxon>
        <taxon>Enterobacteriaceae</taxon>
        <taxon>Salmonella</taxon>
    </lineage>
</organism>
<comment type="subcellular location">
    <subcellularLocation>
        <location evidence="1">Bacterial flagellum basal body</location>
    </subcellularLocation>
</comment>
<comment type="similarity">
    <text evidence="1">Belongs to the FliE family.</text>
</comment>
<dbReference type="EMBL" id="AM933172">
    <property type="protein sequence ID" value="CAR32625.1"/>
    <property type="molecule type" value="Genomic_DNA"/>
</dbReference>
<dbReference type="RefSeq" id="WP_000719037.1">
    <property type="nucleotide sequence ID" value="NC_011294.1"/>
</dbReference>
<dbReference type="SMR" id="B5R0Z0"/>
<dbReference type="KEGG" id="set:SEN1041"/>
<dbReference type="HOGENOM" id="CLU_147249_0_2_6"/>
<dbReference type="Proteomes" id="UP000000613">
    <property type="component" value="Chromosome"/>
</dbReference>
<dbReference type="GO" id="GO:0009425">
    <property type="term" value="C:bacterial-type flagellum basal body"/>
    <property type="evidence" value="ECO:0007669"/>
    <property type="project" value="UniProtKB-SubCell"/>
</dbReference>
<dbReference type="GO" id="GO:0003774">
    <property type="term" value="F:cytoskeletal motor activity"/>
    <property type="evidence" value="ECO:0007669"/>
    <property type="project" value="InterPro"/>
</dbReference>
<dbReference type="GO" id="GO:0005198">
    <property type="term" value="F:structural molecule activity"/>
    <property type="evidence" value="ECO:0007669"/>
    <property type="project" value="InterPro"/>
</dbReference>
<dbReference type="GO" id="GO:0071973">
    <property type="term" value="P:bacterial-type flagellum-dependent cell motility"/>
    <property type="evidence" value="ECO:0007669"/>
    <property type="project" value="InterPro"/>
</dbReference>
<dbReference type="HAMAP" id="MF_00724">
    <property type="entry name" value="FliE"/>
    <property type="match status" value="1"/>
</dbReference>
<dbReference type="InterPro" id="IPR001624">
    <property type="entry name" value="FliE"/>
</dbReference>
<dbReference type="NCBIfam" id="TIGR00205">
    <property type="entry name" value="fliE"/>
    <property type="match status" value="1"/>
</dbReference>
<dbReference type="PANTHER" id="PTHR34653">
    <property type="match status" value="1"/>
</dbReference>
<dbReference type="PANTHER" id="PTHR34653:SF1">
    <property type="entry name" value="FLAGELLAR HOOK-BASAL BODY COMPLEX PROTEIN FLIE"/>
    <property type="match status" value="1"/>
</dbReference>
<dbReference type="Pfam" id="PF02049">
    <property type="entry name" value="FliE"/>
    <property type="match status" value="1"/>
</dbReference>
<dbReference type="PRINTS" id="PR01006">
    <property type="entry name" value="FLGHOOKFLIE"/>
</dbReference>
<evidence type="ECO:0000255" key="1">
    <source>
        <dbReference type="HAMAP-Rule" id="MF_00724"/>
    </source>
</evidence>
<sequence>MAAIQGIEGVISQLQATAMAARGQDTHSQSTVSFAGQLHAALDRISDRQTAARVQAEKFTLGEPGIALNDVMADMQKASVSMQMGIQVRNKLVAAYQEVMSMQV</sequence>
<keyword id="KW-0975">Bacterial flagellum</keyword>
<accession>B5R0Z0</accession>
<protein>
    <recommendedName>
        <fullName evidence="1">Flagellar hook-basal body complex protein FliE</fullName>
    </recommendedName>
</protein>
<reference key="1">
    <citation type="journal article" date="2008" name="Genome Res.">
        <title>Comparative genome analysis of Salmonella enteritidis PT4 and Salmonella gallinarum 287/91 provides insights into evolutionary and host adaptation pathways.</title>
        <authorList>
            <person name="Thomson N.R."/>
            <person name="Clayton D.J."/>
            <person name="Windhorst D."/>
            <person name="Vernikos G."/>
            <person name="Davidson S."/>
            <person name="Churcher C."/>
            <person name="Quail M.A."/>
            <person name="Stevens M."/>
            <person name="Jones M.A."/>
            <person name="Watson M."/>
            <person name="Barron A."/>
            <person name="Layton A."/>
            <person name="Pickard D."/>
            <person name="Kingsley R.A."/>
            <person name="Bignell A."/>
            <person name="Clark L."/>
            <person name="Harris B."/>
            <person name="Ormond D."/>
            <person name="Abdellah Z."/>
            <person name="Brooks K."/>
            <person name="Cherevach I."/>
            <person name="Chillingworth T."/>
            <person name="Woodward J."/>
            <person name="Norberczak H."/>
            <person name="Lord A."/>
            <person name="Arrowsmith C."/>
            <person name="Jagels K."/>
            <person name="Moule S."/>
            <person name="Mungall K."/>
            <person name="Saunders M."/>
            <person name="Whitehead S."/>
            <person name="Chabalgoity J.A."/>
            <person name="Maskell D."/>
            <person name="Humphreys T."/>
            <person name="Roberts M."/>
            <person name="Barrow P.A."/>
            <person name="Dougan G."/>
            <person name="Parkhill J."/>
        </authorList>
    </citation>
    <scope>NUCLEOTIDE SEQUENCE [LARGE SCALE GENOMIC DNA]</scope>
    <source>
        <strain>P125109</strain>
    </source>
</reference>
<name>FLIE_SALEP</name>
<proteinExistence type="inferred from homology"/>